<keyword id="KW-0687">Ribonucleoprotein</keyword>
<keyword id="KW-0689">Ribosomal protein</keyword>
<keyword id="KW-0694">RNA-binding</keyword>
<keyword id="KW-0699">rRNA-binding</keyword>
<evidence type="ECO:0000255" key="1">
    <source>
        <dbReference type="HAMAP-Rule" id="MF_00503"/>
    </source>
</evidence>
<evidence type="ECO:0000305" key="2"/>
<comment type="function">
    <text evidence="1">Binds to the 23S rRNA.</text>
</comment>
<comment type="similarity">
    <text evidence="1">Belongs to the bacterial ribosomal protein bL9 family.</text>
</comment>
<organism>
    <name type="scientific">Burkholderia orbicola (strain MC0-3)</name>
    <dbReference type="NCBI Taxonomy" id="406425"/>
    <lineage>
        <taxon>Bacteria</taxon>
        <taxon>Pseudomonadati</taxon>
        <taxon>Pseudomonadota</taxon>
        <taxon>Betaproteobacteria</taxon>
        <taxon>Burkholderiales</taxon>
        <taxon>Burkholderiaceae</taxon>
        <taxon>Burkholderia</taxon>
        <taxon>Burkholderia cepacia complex</taxon>
        <taxon>Burkholderia orbicola</taxon>
    </lineage>
</organism>
<name>RL9_BURO0</name>
<dbReference type="EMBL" id="CP000958">
    <property type="protein sequence ID" value="ACA91055.1"/>
    <property type="molecule type" value="Genomic_DNA"/>
</dbReference>
<dbReference type="RefSeq" id="WP_006486256.1">
    <property type="nucleotide sequence ID" value="NC_010508.1"/>
</dbReference>
<dbReference type="SMR" id="B1JTF0"/>
<dbReference type="GeneID" id="83048667"/>
<dbReference type="KEGG" id="bcm:Bcenmc03_1894"/>
<dbReference type="HOGENOM" id="CLU_078938_4_1_4"/>
<dbReference type="Proteomes" id="UP000002169">
    <property type="component" value="Chromosome 1"/>
</dbReference>
<dbReference type="GO" id="GO:1990904">
    <property type="term" value="C:ribonucleoprotein complex"/>
    <property type="evidence" value="ECO:0007669"/>
    <property type="project" value="UniProtKB-KW"/>
</dbReference>
<dbReference type="GO" id="GO:0005840">
    <property type="term" value="C:ribosome"/>
    <property type="evidence" value="ECO:0007669"/>
    <property type="project" value="UniProtKB-KW"/>
</dbReference>
<dbReference type="GO" id="GO:0019843">
    <property type="term" value="F:rRNA binding"/>
    <property type="evidence" value="ECO:0007669"/>
    <property type="project" value="UniProtKB-UniRule"/>
</dbReference>
<dbReference type="GO" id="GO:0003735">
    <property type="term" value="F:structural constituent of ribosome"/>
    <property type="evidence" value="ECO:0007669"/>
    <property type="project" value="InterPro"/>
</dbReference>
<dbReference type="GO" id="GO:0006412">
    <property type="term" value="P:translation"/>
    <property type="evidence" value="ECO:0007669"/>
    <property type="project" value="UniProtKB-UniRule"/>
</dbReference>
<dbReference type="Gene3D" id="3.10.430.100">
    <property type="entry name" value="Ribosomal protein L9, C-terminal domain"/>
    <property type="match status" value="1"/>
</dbReference>
<dbReference type="Gene3D" id="3.40.5.10">
    <property type="entry name" value="Ribosomal protein L9, N-terminal domain"/>
    <property type="match status" value="1"/>
</dbReference>
<dbReference type="HAMAP" id="MF_00503">
    <property type="entry name" value="Ribosomal_bL9"/>
    <property type="match status" value="1"/>
</dbReference>
<dbReference type="InterPro" id="IPR000244">
    <property type="entry name" value="Ribosomal_bL9"/>
</dbReference>
<dbReference type="InterPro" id="IPR009027">
    <property type="entry name" value="Ribosomal_bL9/RNase_H1_N"/>
</dbReference>
<dbReference type="InterPro" id="IPR020594">
    <property type="entry name" value="Ribosomal_bL9_bac/chp"/>
</dbReference>
<dbReference type="InterPro" id="IPR020069">
    <property type="entry name" value="Ribosomal_bL9_C"/>
</dbReference>
<dbReference type="InterPro" id="IPR036791">
    <property type="entry name" value="Ribosomal_bL9_C_sf"/>
</dbReference>
<dbReference type="InterPro" id="IPR020070">
    <property type="entry name" value="Ribosomal_bL9_N"/>
</dbReference>
<dbReference type="InterPro" id="IPR036935">
    <property type="entry name" value="Ribosomal_bL9_N_sf"/>
</dbReference>
<dbReference type="NCBIfam" id="TIGR00158">
    <property type="entry name" value="L9"/>
    <property type="match status" value="1"/>
</dbReference>
<dbReference type="PANTHER" id="PTHR21368">
    <property type="entry name" value="50S RIBOSOMAL PROTEIN L9"/>
    <property type="match status" value="1"/>
</dbReference>
<dbReference type="Pfam" id="PF03948">
    <property type="entry name" value="Ribosomal_L9_C"/>
    <property type="match status" value="1"/>
</dbReference>
<dbReference type="Pfam" id="PF01281">
    <property type="entry name" value="Ribosomal_L9_N"/>
    <property type="match status" value="1"/>
</dbReference>
<dbReference type="SUPFAM" id="SSF55658">
    <property type="entry name" value="L9 N-domain-like"/>
    <property type="match status" value="1"/>
</dbReference>
<dbReference type="SUPFAM" id="SSF55653">
    <property type="entry name" value="Ribosomal protein L9 C-domain"/>
    <property type="match status" value="1"/>
</dbReference>
<dbReference type="PROSITE" id="PS00651">
    <property type="entry name" value="RIBOSOMAL_L9"/>
    <property type="match status" value="1"/>
</dbReference>
<gene>
    <name evidence="1" type="primary">rplI</name>
    <name type="ordered locus">Bcenmc03_1894</name>
</gene>
<accession>B1JTF0</accession>
<protein>
    <recommendedName>
        <fullName evidence="1">Large ribosomal subunit protein bL9</fullName>
    </recommendedName>
    <alternativeName>
        <fullName evidence="2">50S ribosomal protein L9</fullName>
    </alternativeName>
</protein>
<sequence length="150" mass="16374">MQIILLEKVANLGNLGDIVKVKDGYARNFLIPNRKARRATKEAIAEFEVRRAELEKIAAEKLAASQAVGEKLNGQSFEITQKSGVDGRLFGSVTNGDVAELLKKAGYEVEKLQVRMPEGPLKMIGEHNVQVALHTDVVVDVTINVIGDHA</sequence>
<proteinExistence type="inferred from homology"/>
<feature type="chain" id="PRO_1000126878" description="Large ribosomal subunit protein bL9">
    <location>
        <begin position="1"/>
        <end position="150"/>
    </location>
</feature>
<reference key="1">
    <citation type="submission" date="2008-02" db="EMBL/GenBank/DDBJ databases">
        <title>Complete sequence of chromosome 1 of Burkholderia cenocepacia MC0-3.</title>
        <authorList>
            <person name="Copeland A."/>
            <person name="Lucas S."/>
            <person name="Lapidus A."/>
            <person name="Barry K."/>
            <person name="Bruce D."/>
            <person name="Goodwin L."/>
            <person name="Glavina del Rio T."/>
            <person name="Dalin E."/>
            <person name="Tice H."/>
            <person name="Pitluck S."/>
            <person name="Chain P."/>
            <person name="Malfatti S."/>
            <person name="Shin M."/>
            <person name="Vergez L."/>
            <person name="Schmutz J."/>
            <person name="Larimer F."/>
            <person name="Land M."/>
            <person name="Hauser L."/>
            <person name="Kyrpides N."/>
            <person name="Mikhailova N."/>
            <person name="Tiedje J."/>
            <person name="Richardson P."/>
        </authorList>
    </citation>
    <scope>NUCLEOTIDE SEQUENCE [LARGE SCALE GENOMIC DNA]</scope>
    <source>
        <strain>MC0-3</strain>
    </source>
</reference>